<keyword id="KW-0997">Cell inner membrane</keyword>
<keyword id="KW-1003">Cell membrane</keyword>
<keyword id="KW-0472">Membrane</keyword>
<keyword id="KW-1185">Reference proteome</keyword>
<keyword id="KW-0812">Transmembrane</keyword>
<keyword id="KW-1133">Transmembrane helix</keyword>
<sequence length="131" mass="14333">MTSRFMLIFAAISGFIFVALGAFGAHVLSKTMGAVEMGWIQTGLEYQAFHTLAILGLAVAMQRRISIWFYWSSVFLALGTVLFSGSLYCLALSHLRLWAFVTPVGGVSFLAGWALMLVGAIRLKRKGVSHE</sequence>
<organism>
    <name type="scientific">Shigella flexneri</name>
    <dbReference type="NCBI Taxonomy" id="623"/>
    <lineage>
        <taxon>Bacteria</taxon>
        <taxon>Pseudomonadati</taxon>
        <taxon>Pseudomonadota</taxon>
        <taxon>Gammaproteobacteria</taxon>
        <taxon>Enterobacterales</taxon>
        <taxon>Enterobacteriaceae</taxon>
        <taxon>Shigella</taxon>
    </lineage>
</organism>
<dbReference type="EMBL" id="AE005674">
    <property type="protein sequence ID" value="AAN44308.1"/>
    <property type="molecule type" value="Genomic_DNA"/>
</dbReference>
<dbReference type="EMBL" id="AE014073">
    <property type="protein sequence ID" value="AAP18133.1"/>
    <property type="molecule type" value="Genomic_DNA"/>
</dbReference>
<dbReference type="RefSeq" id="NP_708601.1">
    <property type="nucleotide sequence ID" value="NC_004337.2"/>
</dbReference>
<dbReference type="RefSeq" id="WP_000203905.1">
    <property type="nucleotide sequence ID" value="NZ_WPGW01000008.1"/>
</dbReference>
<dbReference type="STRING" id="198214.SF2821"/>
<dbReference type="PaxDb" id="198214-SF2821"/>
<dbReference type="GeneID" id="1025771"/>
<dbReference type="KEGG" id="sfl:SF2821"/>
<dbReference type="KEGG" id="sfx:S3016"/>
<dbReference type="PATRIC" id="fig|198214.7.peg.3358"/>
<dbReference type="HOGENOM" id="CLU_096548_3_2_6"/>
<dbReference type="Proteomes" id="UP000001006">
    <property type="component" value="Chromosome"/>
</dbReference>
<dbReference type="Proteomes" id="UP000002673">
    <property type="component" value="Chromosome"/>
</dbReference>
<dbReference type="GO" id="GO:0005886">
    <property type="term" value="C:plasma membrane"/>
    <property type="evidence" value="ECO:0007669"/>
    <property type="project" value="UniProtKB-SubCell"/>
</dbReference>
<dbReference type="InterPro" id="IPR006696">
    <property type="entry name" value="DUF423"/>
</dbReference>
<dbReference type="NCBIfam" id="NF008125">
    <property type="entry name" value="PRK10873.1"/>
    <property type="match status" value="1"/>
</dbReference>
<dbReference type="PANTHER" id="PTHR43461">
    <property type="entry name" value="TRANSMEMBRANE PROTEIN 256"/>
    <property type="match status" value="1"/>
</dbReference>
<dbReference type="PANTHER" id="PTHR43461:SF1">
    <property type="entry name" value="TRANSMEMBRANE PROTEIN 256"/>
    <property type="match status" value="1"/>
</dbReference>
<dbReference type="Pfam" id="PF04241">
    <property type="entry name" value="DUF423"/>
    <property type="match status" value="1"/>
</dbReference>
<comment type="subcellular location">
    <subcellularLocation>
        <location evidence="1">Cell inner membrane</location>
        <topology evidence="1">Multi-pass membrane protein</topology>
    </subcellularLocation>
</comment>
<comment type="similarity">
    <text evidence="3">Belongs to the UPF0382 family.</text>
</comment>
<accession>P0ADR5</accession>
<accession>P32065</accession>
<accession>Q46667</accession>
<feature type="chain" id="PRO_0000169332" description="UPF0382 inner membrane protein YgdD">
    <location>
        <begin position="1"/>
        <end position="131"/>
    </location>
</feature>
<feature type="topological domain" description="Periplasmic" evidence="2">
    <location>
        <begin position="1"/>
        <end position="4"/>
    </location>
</feature>
<feature type="transmembrane region" description="Helical" evidence="2">
    <location>
        <begin position="5"/>
        <end position="25"/>
    </location>
</feature>
<feature type="topological domain" description="Cytoplasmic" evidence="2">
    <location>
        <begin position="26"/>
        <end position="64"/>
    </location>
</feature>
<feature type="transmembrane region" description="Helical" evidence="2">
    <location>
        <begin position="65"/>
        <end position="85"/>
    </location>
</feature>
<feature type="topological domain" description="Periplasmic" evidence="2">
    <location>
        <begin position="86"/>
        <end position="97"/>
    </location>
</feature>
<feature type="transmembrane region" description="Helical" evidence="2">
    <location>
        <begin position="98"/>
        <end position="118"/>
    </location>
</feature>
<feature type="topological domain" description="Cytoplasmic" evidence="2">
    <location>
        <begin position="119"/>
        <end position="131"/>
    </location>
</feature>
<protein>
    <recommendedName>
        <fullName>UPF0382 inner membrane protein YgdD</fullName>
    </recommendedName>
</protein>
<gene>
    <name type="primary">ygdD</name>
    <name type="ordered locus">SF2821</name>
    <name type="ordered locus">S3016</name>
</gene>
<reference key="1">
    <citation type="journal article" date="2002" name="Nucleic Acids Res.">
        <title>Genome sequence of Shigella flexneri 2a: insights into pathogenicity through comparison with genomes of Escherichia coli K12 and O157.</title>
        <authorList>
            <person name="Jin Q."/>
            <person name="Yuan Z."/>
            <person name="Xu J."/>
            <person name="Wang Y."/>
            <person name="Shen Y."/>
            <person name="Lu W."/>
            <person name="Wang J."/>
            <person name="Liu H."/>
            <person name="Yang J."/>
            <person name="Yang F."/>
            <person name="Zhang X."/>
            <person name="Zhang J."/>
            <person name="Yang G."/>
            <person name="Wu H."/>
            <person name="Qu D."/>
            <person name="Dong J."/>
            <person name="Sun L."/>
            <person name="Xue Y."/>
            <person name="Zhao A."/>
            <person name="Gao Y."/>
            <person name="Zhu J."/>
            <person name="Kan B."/>
            <person name="Ding K."/>
            <person name="Chen S."/>
            <person name="Cheng H."/>
            <person name="Yao Z."/>
            <person name="He B."/>
            <person name="Chen R."/>
            <person name="Ma D."/>
            <person name="Qiang B."/>
            <person name="Wen Y."/>
            <person name="Hou Y."/>
            <person name="Yu J."/>
        </authorList>
    </citation>
    <scope>NUCLEOTIDE SEQUENCE [LARGE SCALE GENOMIC DNA]</scope>
    <source>
        <strain>301 / Serotype 2a</strain>
    </source>
</reference>
<reference key="2">
    <citation type="journal article" date="2003" name="Infect. Immun.">
        <title>Complete genome sequence and comparative genomics of Shigella flexneri serotype 2a strain 2457T.</title>
        <authorList>
            <person name="Wei J."/>
            <person name="Goldberg M.B."/>
            <person name="Burland V."/>
            <person name="Venkatesan M.M."/>
            <person name="Deng W."/>
            <person name="Fournier G."/>
            <person name="Mayhew G.F."/>
            <person name="Plunkett G. III"/>
            <person name="Rose D.J."/>
            <person name="Darling A."/>
            <person name="Mau B."/>
            <person name="Perna N.T."/>
            <person name="Payne S.M."/>
            <person name="Runyen-Janecky L.J."/>
            <person name="Zhou S."/>
            <person name="Schwartz D.C."/>
            <person name="Blattner F.R."/>
        </authorList>
    </citation>
    <scope>NUCLEOTIDE SEQUENCE [LARGE SCALE GENOMIC DNA]</scope>
    <source>
        <strain>ATCC 700930 / 2457T / Serotype 2a</strain>
    </source>
</reference>
<evidence type="ECO:0000250" key="1"/>
<evidence type="ECO:0000255" key="2"/>
<evidence type="ECO:0000305" key="3"/>
<name>YGDD_SHIFL</name>
<proteinExistence type="inferred from homology"/>